<sequence length="93" mass="10825">MSRSLRKGPFIDLHLLRKVEKVIKTGDKKPIRTWSRRSTIFPKMIGLTISVHNGKQHIPVFISDEMVGHKLGEFAPTRTYRGHSVDKKIKKRY</sequence>
<keyword id="KW-1185">Reference proteome</keyword>
<keyword id="KW-0687">Ribonucleoprotein</keyword>
<keyword id="KW-0689">Ribosomal protein</keyword>
<keyword id="KW-0694">RNA-binding</keyword>
<keyword id="KW-0699">rRNA-binding</keyword>
<protein>
    <recommendedName>
        <fullName evidence="1">Small ribosomal subunit protein uS19</fullName>
    </recommendedName>
    <alternativeName>
        <fullName evidence="2">30S ribosomal protein S19</fullName>
    </alternativeName>
</protein>
<proteinExistence type="inferred from homology"/>
<accession>Q7VQE4</accession>
<organism>
    <name type="scientific">Blochmanniella floridana</name>
    <dbReference type="NCBI Taxonomy" id="203907"/>
    <lineage>
        <taxon>Bacteria</taxon>
        <taxon>Pseudomonadati</taxon>
        <taxon>Pseudomonadota</taxon>
        <taxon>Gammaproteobacteria</taxon>
        <taxon>Enterobacterales</taxon>
        <taxon>Enterobacteriaceae</taxon>
        <taxon>ant endosymbionts</taxon>
        <taxon>Candidatus Blochmanniella</taxon>
    </lineage>
</organism>
<gene>
    <name evidence="1" type="primary">rpsS</name>
    <name type="ordered locus">Bfl195</name>
</gene>
<name>RS19_BLOFL</name>
<dbReference type="EMBL" id="BX248583">
    <property type="protein sequence ID" value="CAD83710.1"/>
    <property type="molecule type" value="Genomic_DNA"/>
</dbReference>
<dbReference type="SMR" id="Q7VQE4"/>
<dbReference type="STRING" id="203907.Bfl195"/>
<dbReference type="KEGG" id="bfl:Bfl195"/>
<dbReference type="eggNOG" id="COG0185">
    <property type="taxonomic scope" value="Bacteria"/>
</dbReference>
<dbReference type="HOGENOM" id="CLU_144911_0_1_6"/>
<dbReference type="OrthoDB" id="9797833at2"/>
<dbReference type="Proteomes" id="UP000002192">
    <property type="component" value="Chromosome"/>
</dbReference>
<dbReference type="GO" id="GO:0005737">
    <property type="term" value="C:cytoplasm"/>
    <property type="evidence" value="ECO:0007669"/>
    <property type="project" value="UniProtKB-ARBA"/>
</dbReference>
<dbReference type="GO" id="GO:0015935">
    <property type="term" value="C:small ribosomal subunit"/>
    <property type="evidence" value="ECO:0007669"/>
    <property type="project" value="InterPro"/>
</dbReference>
<dbReference type="GO" id="GO:0019843">
    <property type="term" value="F:rRNA binding"/>
    <property type="evidence" value="ECO:0007669"/>
    <property type="project" value="UniProtKB-UniRule"/>
</dbReference>
<dbReference type="GO" id="GO:0003735">
    <property type="term" value="F:structural constituent of ribosome"/>
    <property type="evidence" value="ECO:0007669"/>
    <property type="project" value="InterPro"/>
</dbReference>
<dbReference type="GO" id="GO:0000028">
    <property type="term" value="P:ribosomal small subunit assembly"/>
    <property type="evidence" value="ECO:0007669"/>
    <property type="project" value="TreeGrafter"/>
</dbReference>
<dbReference type="GO" id="GO:0006412">
    <property type="term" value="P:translation"/>
    <property type="evidence" value="ECO:0007669"/>
    <property type="project" value="UniProtKB-UniRule"/>
</dbReference>
<dbReference type="FunFam" id="3.30.860.10:FF:000001">
    <property type="entry name" value="30S ribosomal protein S19"/>
    <property type="match status" value="1"/>
</dbReference>
<dbReference type="Gene3D" id="3.30.860.10">
    <property type="entry name" value="30s Ribosomal Protein S19, Chain A"/>
    <property type="match status" value="1"/>
</dbReference>
<dbReference type="HAMAP" id="MF_00531">
    <property type="entry name" value="Ribosomal_uS19"/>
    <property type="match status" value="1"/>
</dbReference>
<dbReference type="InterPro" id="IPR002222">
    <property type="entry name" value="Ribosomal_uS19"/>
</dbReference>
<dbReference type="InterPro" id="IPR005732">
    <property type="entry name" value="Ribosomal_uS19_bac-type"/>
</dbReference>
<dbReference type="InterPro" id="IPR020934">
    <property type="entry name" value="Ribosomal_uS19_CS"/>
</dbReference>
<dbReference type="InterPro" id="IPR023575">
    <property type="entry name" value="Ribosomal_uS19_SF"/>
</dbReference>
<dbReference type="NCBIfam" id="TIGR01050">
    <property type="entry name" value="rpsS_bact"/>
    <property type="match status" value="1"/>
</dbReference>
<dbReference type="PANTHER" id="PTHR11880">
    <property type="entry name" value="RIBOSOMAL PROTEIN S19P FAMILY MEMBER"/>
    <property type="match status" value="1"/>
</dbReference>
<dbReference type="PANTHER" id="PTHR11880:SF8">
    <property type="entry name" value="SMALL RIBOSOMAL SUBUNIT PROTEIN US19M"/>
    <property type="match status" value="1"/>
</dbReference>
<dbReference type="Pfam" id="PF00203">
    <property type="entry name" value="Ribosomal_S19"/>
    <property type="match status" value="1"/>
</dbReference>
<dbReference type="PIRSF" id="PIRSF002144">
    <property type="entry name" value="Ribosomal_S19"/>
    <property type="match status" value="1"/>
</dbReference>
<dbReference type="PRINTS" id="PR00975">
    <property type="entry name" value="RIBOSOMALS19"/>
</dbReference>
<dbReference type="SUPFAM" id="SSF54570">
    <property type="entry name" value="Ribosomal protein S19"/>
    <property type="match status" value="1"/>
</dbReference>
<dbReference type="PROSITE" id="PS00323">
    <property type="entry name" value="RIBOSOMAL_S19"/>
    <property type="match status" value="1"/>
</dbReference>
<comment type="function">
    <text evidence="1">Protein S19 forms a complex with S13 that binds strongly to the 16S ribosomal RNA.</text>
</comment>
<comment type="similarity">
    <text evidence="1">Belongs to the universal ribosomal protein uS19 family.</text>
</comment>
<reference key="1">
    <citation type="journal article" date="2003" name="Proc. Natl. Acad. Sci. U.S.A.">
        <title>The genome sequence of Blochmannia floridanus: comparative analysis of reduced genomes.</title>
        <authorList>
            <person name="Gil R."/>
            <person name="Silva F.J."/>
            <person name="Zientz E."/>
            <person name="Delmotte F."/>
            <person name="Gonzalez-Candelas F."/>
            <person name="Latorre A."/>
            <person name="Rausell C."/>
            <person name="Kamerbeek J."/>
            <person name="Gadau J."/>
            <person name="Hoelldobler B."/>
            <person name="van Ham R.C.H.J."/>
            <person name="Gross R."/>
            <person name="Moya A."/>
        </authorList>
    </citation>
    <scope>NUCLEOTIDE SEQUENCE [LARGE SCALE GENOMIC DNA]</scope>
</reference>
<feature type="chain" id="PRO_0000129800" description="Small ribosomal subunit protein uS19">
    <location>
        <begin position="1"/>
        <end position="93"/>
    </location>
</feature>
<evidence type="ECO:0000255" key="1">
    <source>
        <dbReference type="HAMAP-Rule" id="MF_00531"/>
    </source>
</evidence>
<evidence type="ECO:0000305" key="2"/>